<sequence length="95" mass="10187">MSVDLATVKRVARLARIAVSEDEANRMVGELNGILGFVEQLSEVNVDGVEAMTSVTPTAMKKRTDEVTDGSKAADIVANAPVTDHNFFLVPKVVE</sequence>
<keyword id="KW-0067">ATP-binding</keyword>
<keyword id="KW-0436">Ligase</keyword>
<keyword id="KW-0547">Nucleotide-binding</keyword>
<keyword id="KW-0648">Protein biosynthesis</keyword>
<proteinExistence type="inferred from homology"/>
<organism>
    <name type="scientific">Rhizobium johnstonii (strain DSM 114642 / LMG 32736 / 3841)</name>
    <name type="common">Rhizobium leguminosarum bv. viciae</name>
    <dbReference type="NCBI Taxonomy" id="216596"/>
    <lineage>
        <taxon>Bacteria</taxon>
        <taxon>Pseudomonadati</taxon>
        <taxon>Pseudomonadota</taxon>
        <taxon>Alphaproteobacteria</taxon>
        <taxon>Hyphomicrobiales</taxon>
        <taxon>Rhizobiaceae</taxon>
        <taxon>Rhizobium/Agrobacterium group</taxon>
        <taxon>Rhizobium</taxon>
        <taxon>Rhizobium johnstonii</taxon>
    </lineage>
</organism>
<accession>Q1MHJ6</accession>
<evidence type="ECO:0000255" key="1">
    <source>
        <dbReference type="HAMAP-Rule" id="MF_00122"/>
    </source>
</evidence>
<feature type="chain" id="PRO_1000016189" description="Aspartyl/glutamyl-tRNA(Asn/Gln) amidotransferase subunit C">
    <location>
        <begin position="1"/>
        <end position="95"/>
    </location>
</feature>
<comment type="function">
    <text evidence="1">Allows the formation of correctly charged Asn-tRNA(Asn) or Gln-tRNA(Gln) through the transamidation of misacylated Asp-tRNA(Asn) or Glu-tRNA(Gln) in organisms which lack either or both of asparaginyl-tRNA or glutaminyl-tRNA synthetases. The reaction takes place in the presence of glutamine and ATP through an activated phospho-Asp-tRNA(Asn) or phospho-Glu-tRNA(Gln).</text>
</comment>
<comment type="catalytic activity">
    <reaction evidence="1">
        <text>L-glutamyl-tRNA(Gln) + L-glutamine + ATP + H2O = L-glutaminyl-tRNA(Gln) + L-glutamate + ADP + phosphate + H(+)</text>
        <dbReference type="Rhea" id="RHEA:17521"/>
        <dbReference type="Rhea" id="RHEA-COMP:9681"/>
        <dbReference type="Rhea" id="RHEA-COMP:9684"/>
        <dbReference type="ChEBI" id="CHEBI:15377"/>
        <dbReference type="ChEBI" id="CHEBI:15378"/>
        <dbReference type="ChEBI" id="CHEBI:29985"/>
        <dbReference type="ChEBI" id="CHEBI:30616"/>
        <dbReference type="ChEBI" id="CHEBI:43474"/>
        <dbReference type="ChEBI" id="CHEBI:58359"/>
        <dbReference type="ChEBI" id="CHEBI:78520"/>
        <dbReference type="ChEBI" id="CHEBI:78521"/>
        <dbReference type="ChEBI" id="CHEBI:456216"/>
    </reaction>
</comment>
<comment type="catalytic activity">
    <reaction evidence="1">
        <text>L-aspartyl-tRNA(Asn) + L-glutamine + ATP + H2O = L-asparaginyl-tRNA(Asn) + L-glutamate + ADP + phosphate + 2 H(+)</text>
        <dbReference type="Rhea" id="RHEA:14513"/>
        <dbReference type="Rhea" id="RHEA-COMP:9674"/>
        <dbReference type="Rhea" id="RHEA-COMP:9677"/>
        <dbReference type="ChEBI" id="CHEBI:15377"/>
        <dbReference type="ChEBI" id="CHEBI:15378"/>
        <dbReference type="ChEBI" id="CHEBI:29985"/>
        <dbReference type="ChEBI" id="CHEBI:30616"/>
        <dbReference type="ChEBI" id="CHEBI:43474"/>
        <dbReference type="ChEBI" id="CHEBI:58359"/>
        <dbReference type="ChEBI" id="CHEBI:78515"/>
        <dbReference type="ChEBI" id="CHEBI:78516"/>
        <dbReference type="ChEBI" id="CHEBI:456216"/>
    </reaction>
</comment>
<comment type="subunit">
    <text evidence="1">Heterotrimer of A, B and C subunits.</text>
</comment>
<comment type="similarity">
    <text evidence="1">Belongs to the GatC family.</text>
</comment>
<name>GATC_RHIJ3</name>
<protein>
    <recommendedName>
        <fullName evidence="1">Aspartyl/glutamyl-tRNA(Asn/Gln) amidotransferase subunit C</fullName>
        <shortName evidence="1">Asp/Glu-ADT subunit C</shortName>
        <ecNumber evidence="1">6.3.5.-</ecNumber>
    </recommendedName>
</protein>
<dbReference type="EC" id="6.3.5.-" evidence="1"/>
<dbReference type="EMBL" id="AM236080">
    <property type="protein sequence ID" value="CAK07567.1"/>
    <property type="molecule type" value="Genomic_DNA"/>
</dbReference>
<dbReference type="RefSeq" id="WP_003539052.1">
    <property type="nucleotide sequence ID" value="NC_008380.1"/>
</dbReference>
<dbReference type="SMR" id="Q1MHJ6"/>
<dbReference type="EnsemblBacteria" id="CAK07567">
    <property type="protein sequence ID" value="CAK07567"/>
    <property type="gene ID" value="RL2075"/>
</dbReference>
<dbReference type="GeneID" id="67485771"/>
<dbReference type="KEGG" id="rle:RL2075"/>
<dbReference type="eggNOG" id="COG0721">
    <property type="taxonomic scope" value="Bacteria"/>
</dbReference>
<dbReference type="HOGENOM" id="CLU_105899_2_0_5"/>
<dbReference type="Proteomes" id="UP000006575">
    <property type="component" value="Chromosome"/>
</dbReference>
<dbReference type="GO" id="GO:0050566">
    <property type="term" value="F:asparaginyl-tRNA synthase (glutamine-hydrolyzing) activity"/>
    <property type="evidence" value="ECO:0007669"/>
    <property type="project" value="RHEA"/>
</dbReference>
<dbReference type="GO" id="GO:0005524">
    <property type="term" value="F:ATP binding"/>
    <property type="evidence" value="ECO:0007669"/>
    <property type="project" value="UniProtKB-KW"/>
</dbReference>
<dbReference type="GO" id="GO:0050567">
    <property type="term" value="F:glutaminyl-tRNA synthase (glutamine-hydrolyzing) activity"/>
    <property type="evidence" value="ECO:0007669"/>
    <property type="project" value="UniProtKB-UniRule"/>
</dbReference>
<dbReference type="GO" id="GO:0070681">
    <property type="term" value="P:glutaminyl-tRNAGln biosynthesis via transamidation"/>
    <property type="evidence" value="ECO:0007669"/>
    <property type="project" value="TreeGrafter"/>
</dbReference>
<dbReference type="GO" id="GO:0006450">
    <property type="term" value="P:regulation of translational fidelity"/>
    <property type="evidence" value="ECO:0007669"/>
    <property type="project" value="InterPro"/>
</dbReference>
<dbReference type="GO" id="GO:0006412">
    <property type="term" value="P:translation"/>
    <property type="evidence" value="ECO:0007669"/>
    <property type="project" value="UniProtKB-UniRule"/>
</dbReference>
<dbReference type="Gene3D" id="1.10.20.60">
    <property type="entry name" value="Glu-tRNAGln amidotransferase C subunit, N-terminal domain"/>
    <property type="match status" value="1"/>
</dbReference>
<dbReference type="HAMAP" id="MF_00122">
    <property type="entry name" value="GatC"/>
    <property type="match status" value="1"/>
</dbReference>
<dbReference type="InterPro" id="IPR036113">
    <property type="entry name" value="Asp/Glu-ADT_sf_sub_c"/>
</dbReference>
<dbReference type="InterPro" id="IPR003837">
    <property type="entry name" value="GatC"/>
</dbReference>
<dbReference type="NCBIfam" id="TIGR00135">
    <property type="entry name" value="gatC"/>
    <property type="match status" value="1"/>
</dbReference>
<dbReference type="PANTHER" id="PTHR15004">
    <property type="entry name" value="GLUTAMYL-TRNA(GLN) AMIDOTRANSFERASE SUBUNIT C, MITOCHONDRIAL"/>
    <property type="match status" value="1"/>
</dbReference>
<dbReference type="PANTHER" id="PTHR15004:SF0">
    <property type="entry name" value="GLUTAMYL-TRNA(GLN) AMIDOTRANSFERASE SUBUNIT C, MITOCHONDRIAL"/>
    <property type="match status" value="1"/>
</dbReference>
<dbReference type="Pfam" id="PF02686">
    <property type="entry name" value="GatC"/>
    <property type="match status" value="1"/>
</dbReference>
<dbReference type="SUPFAM" id="SSF141000">
    <property type="entry name" value="Glu-tRNAGln amidotransferase C subunit"/>
    <property type="match status" value="1"/>
</dbReference>
<reference key="1">
    <citation type="journal article" date="2006" name="Genome Biol.">
        <title>The genome of Rhizobium leguminosarum has recognizable core and accessory components.</title>
        <authorList>
            <person name="Young J.P.W."/>
            <person name="Crossman L.C."/>
            <person name="Johnston A.W.B."/>
            <person name="Thomson N.R."/>
            <person name="Ghazoui Z.F."/>
            <person name="Hull K.H."/>
            <person name="Wexler M."/>
            <person name="Curson A.R.J."/>
            <person name="Todd J.D."/>
            <person name="Poole P.S."/>
            <person name="Mauchline T.H."/>
            <person name="East A.K."/>
            <person name="Quail M.A."/>
            <person name="Churcher C."/>
            <person name="Arrowsmith C."/>
            <person name="Cherevach I."/>
            <person name="Chillingworth T."/>
            <person name="Clarke K."/>
            <person name="Cronin A."/>
            <person name="Davis P."/>
            <person name="Fraser A."/>
            <person name="Hance Z."/>
            <person name="Hauser H."/>
            <person name="Jagels K."/>
            <person name="Moule S."/>
            <person name="Mungall K."/>
            <person name="Norbertczak H."/>
            <person name="Rabbinowitsch E."/>
            <person name="Sanders M."/>
            <person name="Simmonds M."/>
            <person name="Whitehead S."/>
            <person name="Parkhill J."/>
        </authorList>
    </citation>
    <scope>NUCLEOTIDE SEQUENCE [LARGE SCALE GENOMIC DNA]</scope>
    <source>
        <strain>DSM 114642 / LMG 32736 / 3841</strain>
    </source>
</reference>
<gene>
    <name evidence="1" type="primary">gatC</name>
    <name type="ordered locus">RL2075</name>
</gene>